<proteinExistence type="inferred from homology"/>
<feature type="chain" id="PRO_0000320807" description="Protein translocase subunit SecA">
    <location>
        <begin position="1"/>
        <end position="901"/>
    </location>
</feature>
<feature type="region of interest" description="Disordered" evidence="2">
    <location>
        <begin position="868"/>
        <end position="901"/>
    </location>
</feature>
<feature type="compositionally biased region" description="Basic residues" evidence="2">
    <location>
        <begin position="891"/>
        <end position="901"/>
    </location>
</feature>
<feature type="binding site" evidence="1">
    <location>
        <position position="87"/>
    </location>
    <ligand>
        <name>ATP</name>
        <dbReference type="ChEBI" id="CHEBI:30616"/>
    </ligand>
</feature>
<feature type="binding site" evidence="1">
    <location>
        <begin position="105"/>
        <end position="109"/>
    </location>
    <ligand>
        <name>ATP</name>
        <dbReference type="ChEBI" id="CHEBI:30616"/>
    </ligand>
</feature>
<feature type="binding site" evidence="1">
    <location>
        <position position="512"/>
    </location>
    <ligand>
        <name>ATP</name>
        <dbReference type="ChEBI" id="CHEBI:30616"/>
    </ligand>
</feature>
<feature type="binding site" evidence="1">
    <location>
        <position position="885"/>
    </location>
    <ligand>
        <name>Zn(2+)</name>
        <dbReference type="ChEBI" id="CHEBI:29105"/>
    </ligand>
</feature>
<feature type="binding site" evidence="1">
    <location>
        <position position="887"/>
    </location>
    <ligand>
        <name>Zn(2+)</name>
        <dbReference type="ChEBI" id="CHEBI:29105"/>
    </ligand>
</feature>
<feature type="binding site" evidence="1">
    <location>
        <position position="896"/>
    </location>
    <ligand>
        <name>Zn(2+)</name>
        <dbReference type="ChEBI" id="CHEBI:29105"/>
    </ligand>
</feature>
<feature type="binding site" evidence="1">
    <location>
        <position position="897"/>
    </location>
    <ligand>
        <name>Zn(2+)</name>
        <dbReference type="ChEBI" id="CHEBI:29105"/>
    </ligand>
</feature>
<sequence>MLIKLLTKVFGSRNDRTLRRMRKVVNIINAMEPEMEKLSDEELKGKTAEFRARLEKGEVLENLIPEAFAVVREASKRVFGMRHFDVQLLGGMVLNERCIAEMRTGEGKTLTATLPAYLNALTGKGVHVVTVNDYLAQRDAENNRPLFEFLGLTVGINLPGMPAPAKREAYAADITYGTNNEYGFDYLRDNMAFSPEERVQRKLHYALVDEVDSILIDEARTPLIISGPAEDSSEMYKRVNKIIPHLIRQEKEDSETFQGEGHFSVDEKSRQVNLTERGLVLIEELLVKEGIMDEGESLYSPANIMLMHHVTAALRAHALFTRDVDYIVKDGEVIIVDEHTGRTMQGRRWSDGLHQAVEAKEGVQIQNENQTLASITFQNYFRLYEKLAGMTGTADTEAFEFSSIYKLDTVVVPTNRPMIRKDLPDLVYMTEAEKIQAIIEDIKERTAKGQPVLVGTISIEKSELVSNELTKAGIKHNVLNAKFHANEAAIVAQAGYPAAVTIATNMAGRGTDIVLGGSWQAEVAALENPTAEQIEKIKADWQVRHDAVLAAGGLHIIGTERHESRRIDNQLRGRSGRQGDAGSSRFYLSMEDALMRIFASDRVSGMMRKLGMKPGEAIEHPWVTKAIANAQRKVESRNFDIRKQLLEYDDVANDQRRAIYSQRNELLDVSDVSETINSIREDVFKATIDAYIPPQSLEEMWDIPGLQERLKNDFDLDLPIAEWLDKEPELHEETLRERILAQSIEVYQRKEEVVGAEMMRHFEKGVMLQTLDSLWKEHLAAMDYLRQGIHLRGYAQKDPKQEYKRESFSMFAAMLESLKYEVISTLSKVQVRMPEEVEELEQQRRMEAERLAQMQQLSYQDDDSAAAAALAAQTGERKVGRNDPCPCGSGKKYKQCHGRLQ</sequence>
<name>SECA_ECOK1</name>
<protein>
    <recommendedName>
        <fullName evidence="1">Protein translocase subunit SecA</fullName>
        <ecNumber evidence="1">7.4.2.8</ecNumber>
    </recommendedName>
</protein>
<organism>
    <name type="scientific">Escherichia coli O1:K1 / APEC</name>
    <dbReference type="NCBI Taxonomy" id="405955"/>
    <lineage>
        <taxon>Bacteria</taxon>
        <taxon>Pseudomonadati</taxon>
        <taxon>Pseudomonadota</taxon>
        <taxon>Gammaproteobacteria</taxon>
        <taxon>Enterobacterales</taxon>
        <taxon>Enterobacteriaceae</taxon>
        <taxon>Escherichia</taxon>
    </lineage>
</organism>
<evidence type="ECO:0000255" key="1">
    <source>
        <dbReference type="HAMAP-Rule" id="MF_01382"/>
    </source>
</evidence>
<evidence type="ECO:0000256" key="2">
    <source>
        <dbReference type="SAM" id="MobiDB-lite"/>
    </source>
</evidence>
<accession>A1A7E3</accession>
<dbReference type="EC" id="7.4.2.8" evidence="1"/>
<dbReference type="EMBL" id="CP000468">
    <property type="protein sequence ID" value="ABI99582.1"/>
    <property type="molecule type" value="Genomic_DNA"/>
</dbReference>
<dbReference type="RefSeq" id="WP_000905783.1">
    <property type="nucleotide sequence ID" value="NZ_CADILS010000048.1"/>
</dbReference>
<dbReference type="BMRB" id="A1A7E3"/>
<dbReference type="SMR" id="A1A7E3"/>
<dbReference type="KEGG" id="ecv:APECO1_1888"/>
<dbReference type="HOGENOM" id="CLU_005314_3_0_6"/>
<dbReference type="Proteomes" id="UP000008216">
    <property type="component" value="Chromosome"/>
</dbReference>
<dbReference type="GO" id="GO:0031522">
    <property type="term" value="C:cell envelope Sec protein transport complex"/>
    <property type="evidence" value="ECO:0007669"/>
    <property type="project" value="TreeGrafter"/>
</dbReference>
<dbReference type="GO" id="GO:0005829">
    <property type="term" value="C:cytosol"/>
    <property type="evidence" value="ECO:0007669"/>
    <property type="project" value="TreeGrafter"/>
</dbReference>
<dbReference type="GO" id="GO:0005886">
    <property type="term" value="C:plasma membrane"/>
    <property type="evidence" value="ECO:0007669"/>
    <property type="project" value="UniProtKB-SubCell"/>
</dbReference>
<dbReference type="GO" id="GO:0005524">
    <property type="term" value="F:ATP binding"/>
    <property type="evidence" value="ECO:0007669"/>
    <property type="project" value="UniProtKB-UniRule"/>
</dbReference>
<dbReference type="GO" id="GO:0046872">
    <property type="term" value="F:metal ion binding"/>
    <property type="evidence" value="ECO:0007669"/>
    <property type="project" value="UniProtKB-KW"/>
</dbReference>
<dbReference type="GO" id="GO:0008564">
    <property type="term" value="F:protein-exporting ATPase activity"/>
    <property type="evidence" value="ECO:0007669"/>
    <property type="project" value="UniProtKB-EC"/>
</dbReference>
<dbReference type="GO" id="GO:0065002">
    <property type="term" value="P:intracellular protein transmembrane transport"/>
    <property type="evidence" value="ECO:0007669"/>
    <property type="project" value="UniProtKB-UniRule"/>
</dbReference>
<dbReference type="GO" id="GO:0017038">
    <property type="term" value="P:protein import"/>
    <property type="evidence" value="ECO:0007669"/>
    <property type="project" value="InterPro"/>
</dbReference>
<dbReference type="GO" id="GO:0006605">
    <property type="term" value="P:protein targeting"/>
    <property type="evidence" value="ECO:0007669"/>
    <property type="project" value="UniProtKB-UniRule"/>
</dbReference>
<dbReference type="GO" id="GO:0043952">
    <property type="term" value="P:protein transport by the Sec complex"/>
    <property type="evidence" value="ECO:0007669"/>
    <property type="project" value="TreeGrafter"/>
</dbReference>
<dbReference type="CDD" id="cd17928">
    <property type="entry name" value="DEXDc_SecA"/>
    <property type="match status" value="1"/>
</dbReference>
<dbReference type="CDD" id="cd18803">
    <property type="entry name" value="SF2_C_secA"/>
    <property type="match status" value="1"/>
</dbReference>
<dbReference type="FunFam" id="1.10.3060.10:FF:000001">
    <property type="entry name" value="Preprotein translocase subunit SecA"/>
    <property type="match status" value="1"/>
</dbReference>
<dbReference type="FunFam" id="3.40.50.300:FF:000081">
    <property type="entry name" value="Preprotein translocase subunit SecA"/>
    <property type="match status" value="1"/>
</dbReference>
<dbReference type="FunFam" id="3.40.50.300:FF:000113">
    <property type="entry name" value="Preprotein translocase subunit SecA"/>
    <property type="match status" value="1"/>
</dbReference>
<dbReference type="FunFam" id="3.90.1440.10:FF:000001">
    <property type="entry name" value="Preprotein translocase subunit SecA"/>
    <property type="match status" value="1"/>
</dbReference>
<dbReference type="Gene3D" id="1.10.3060.10">
    <property type="entry name" value="Helical scaffold and wing domains of SecA"/>
    <property type="match status" value="1"/>
</dbReference>
<dbReference type="Gene3D" id="3.40.50.300">
    <property type="entry name" value="P-loop containing nucleotide triphosphate hydrolases"/>
    <property type="match status" value="2"/>
</dbReference>
<dbReference type="Gene3D" id="3.90.1440.10">
    <property type="entry name" value="SecA, preprotein cross-linking domain"/>
    <property type="match status" value="1"/>
</dbReference>
<dbReference type="HAMAP" id="MF_01382">
    <property type="entry name" value="SecA"/>
    <property type="match status" value="1"/>
</dbReference>
<dbReference type="InterPro" id="IPR014001">
    <property type="entry name" value="Helicase_ATP-bd"/>
</dbReference>
<dbReference type="InterPro" id="IPR001650">
    <property type="entry name" value="Helicase_C-like"/>
</dbReference>
<dbReference type="InterPro" id="IPR027417">
    <property type="entry name" value="P-loop_NTPase"/>
</dbReference>
<dbReference type="InterPro" id="IPR004027">
    <property type="entry name" value="SEC_C_motif"/>
</dbReference>
<dbReference type="InterPro" id="IPR000185">
    <property type="entry name" value="SecA"/>
</dbReference>
<dbReference type="InterPro" id="IPR020937">
    <property type="entry name" value="SecA_CS"/>
</dbReference>
<dbReference type="InterPro" id="IPR011115">
    <property type="entry name" value="SecA_DEAD"/>
</dbReference>
<dbReference type="InterPro" id="IPR014018">
    <property type="entry name" value="SecA_motor_DEAD"/>
</dbReference>
<dbReference type="InterPro" id="IPR011130">
    <property type="entry name" value="SecA_preprotein_X-link_dom"/>
</dbReference>
<dbReference type="InterPro" id="IPR044722">
    <property type="entry name" value="SecA_SF2_C"/>
</dbReference>
<dbReference type="InterPro" id="IPR011116">
    <property type="entry name" value="SecA_Wing/Scaffold"/>
</dbReference>
<dbReference type="InterPro" id="IPR036266">
    <property type="entry name" value="SecA_Wing/Scaffold_sf"/>
</dbReference>
<dbReference type="InterPro" id="IPR036670">
    <property type="entry name" value="SecA_X-link_sf"/>
</dbReference>
<dbReference type="NCBIfam" id="NF009538">
    <property type="entry name" value="PRK12904.1"/>
    <property type="match status" value="1"/>
</dbReference>
<dbReference type="NCBIfam" id="TIGR00963">
    <property type="entry name" value="secA"/>
    <property type="match status" value="1"/>
</dbReference>
<dbReference type="PANTHER" id="PTHR30612:SF0">
    <property type="entry name" value="CHLOROPLAST PROTEIN-TRANSPORTING ATPASE"/>
    <property type="match status" value="1"/>
</dbReference>
<dbReference type="PANTHER" id="PTHR30612">
    <property type="entry name" value="SECA INNER MEMBRANE COMPONENT OF SEC PROTEIN SECRETION SYSTEM"/>
    <property type="match status" value="1"/>
</dbReference>
<dbReference type="Pfam" id="PF21090">
    <property type="entry name" value="P-loop_SecA"/>
    <property type="match status" value="1"/>
</dbReference>
<dbReference type="Pfam" id="PF02810">
    <property type="entry name" value="SEC-C"/>
    <property type="match status" value="1"/>
</dbReference>
<dbReference type="Pfam" id="PF07517">
    <property type="entry name" value="SecA_DEAD"/>
    <property type="match status" value="1"/>
</dbReference>
<dbReference type="Pfam" id="PF01043">
    <property type="entry name" value="SecA_PP_bind"/>
    <property type="match status" value="1"/>
</dbReference>
<dbReference type="Pfam" id="PF07516">
    <property type="entry name" value="SecA_SW"/>
    <property type="match status" value="1"/>
</dbReference>
<dbReference type="PRINTS" id="PR00906">
    <property type="entry name" value="SECA"/>
</dbReference>
<dbReference type="SMART" id="SM00957">
    <property type="entry name" value="SecA_DEAD"/>
    <property type="match status" value="1"/>
</dbReference>
<dbReference type="SMART" id="SM00958">
    <property type="entry name" value="SecA_PP_bind"/>
    <property type="match status" value="1"/>
</dbReference>
<dbReference type="SUPFAM" id="SSF81886">
    <property type="entry name" value="Helical scaffold and wing domains of SecA"/>
    <property type="match status" value="1"/>
</dbReference>
<dbReference type="SUPFAM" id="SSF52540">
    <property type="entry name" value="P-loop containing nucleoside triphosphate hydrolases"/>
    <property type="match status" value="2"/>
</dbReference>
<dbReference type="SUPFAM" id="SSF81767">
    <property type="entry name" value="Pre-protein crosslinking domain of SecA"/>
    <property type="match status" value="1"/>
</dbReference>
<dbReference type="PROSITE" id="PS01312">
    <property type="entry name" value="SECA"/>
    <property type="match status" value="1"/>
</dbReference>
<dbReference type="PROSITE" id="PS51196">
    <property type="entry name" value="SECA_MOTOR_DEAD"/>
    <property type="match status" value="1"/>
</dbReference>
<comment type="function">
    <text evidence="1">Part of the Sec protein translocase complex. Interacts with the SecYEG preprotein conducting channel. Has a central role in coupling the hydrolysis of ATP to the transfer of proteins into and across the cell membrane, serving both as a receptor for the preprotein-SecB complex and as an ATP-driven molecular motor driving the stepwise translocation of polypeptide chains across the membrane.</text>
</comment>
<comment type="catalytic activity">
    <reaction evidence="1">
        <text>ATP + H2O + cellular proteinSide 1 = ADP + phosphate + cellular proteinSide 2.</text>
        <dbReference type="EC" id="7.4.2.8"/>
    </reaction>
</comment>
<comment type="cofactor">
    <cofactor evidence="1">
        <name>Zn(2+)</name>
        <dbReference type="ChEBI" id="CHEBI:29105"/>
    </cofactor>
    <text evidence="1">May bind 1 zinc ion per subunit.</text>
</comment>
<comment type="subunit">
    <text evidence="1">Monomer and homodimer. Part of the essential Sec protein translocation apparatus which comprises SecA, SecYEG and auxiliary proteins SecDF-YajC and YidC.</text>
</comment>
<comment type="subcellular location">
    <subcellularLocation>
        <location evidence="1">Cell inner membrane</location>
        <topology evidence="1">Peripheral membrane protein</topology>
        <orientation evidence="1">Cytoplasmic side</orientation>
    </subcellularLocation>
    <subcellularLocation>
        <location evidence="1">Cytoplasm</location>
    </subcellularLocation>
    <text evidence="1">Distribution is 50-50.</text>
</comment>
<comment type="induction">
    <text evidence="1">Repressed under conditions of excess protein secretion capacity and derepressed when protein secretion becomes limiting. This is regulated by SecM.</text>
</comment>
<comment type="similarity">
    <text evidence="1">Belongs to the SecA family.</text>
</comment>
<gene>
    <name evidence="1" type="primary">secA</name>
    <name type="ordered locus">Ecok1_00890</name>
    <name type="ORF">APECO1_1888</name>
</gene>
<reference key="1">
    <citation type="journal article" date="2007" name="J. Bacteriol.">
        <title>The genome sequence of avian pathogenic Escherichia coli strain O1:K1:H7 shares strong similarities with human extraintestinal pathogenic E. coli genomes.</title>
        <authorList>
            <person name="Johnson T.J."/>
            <person name="Kariyawasam S."/>
            <person name="Wannemuehler Y."/>
            <person name="Mangiamele P."/>
            <person name="Johnson S.J."/>
            <person name="Doetkott C."/>
            <person name="Skyberg J.A."/>
            <person name="Lynne A.M."/>
            <person name="Johnson J.R."/>
            <person name="Nolan L.K."/>
        </authorList>
    </citation>
    <scope>NUCLEOTIDE SEQUENCE [LARGE SCALE GENOMIC DNA]</scope>
</reference>
<keyword id="KW-0067">ATP-binding</keyword>
<keyword id="KW-0997">Cell inner membrane</keyword>
<keyword id="KW-1003">Cell membrane</keyword>
<keyword id="KW-0963">Cytoplasm</keyword>
<keyword id="KW-0472">Membrane</keyword>
<keyword id="KW-0479">Metal-binding</keyword>
<keyword id="KW-0547">Nucleotide-binding</keyword>
<keyword id="KW-0653">Protein transport</keyword>
<keyword id="KW-1185">Reference proteome</keyword>
<keyword id="KW-1278">Translocase</keyword>
<keyword id="KW-0811">Translocation</keyword>
<keyword id="KW-0813">Transport</keyword>
<keyword id="KW-0862">Zinc</keyword>